<reference key="1">
    <citation type="journal article" date="2010" name="PLoS ONE">
        <title>The complete multipartite genome sequence of Cupriavidus necator JMP134, a versatile pollutant degrader.</title>
        <authorList>
            <person name="Lykidis A."/>
            <person name="Perez-Pantoja D."/>
            <person name="Ledger T."/>
            <person name="Mavromatis K."/>
            <person name="Anderson I.J."/>
            <person name="Ivanova N.N."/>
            <person name="Hooper S.D."/>
            <person name="Lapidus A."/>
            <person name="Lucas S."/>
            <person name="Gonzalez B."/>
            <person name="Kyrpides N.C."/>
        </authorList>
    </citation>
    <scope>NUCLEOTIDE SEQUENCE [LARGE SCALE GENOMIC DNA]</scope>
    <source>
        <strain>JMP134 / LMG 1197</strain>
    </source>
</reference>
<name>PSRP_CUPPJ</name>
<sequence length="301" mass="33680">MSEPVAPDGAQPAPAGATPQPLQPIAGDRPATRTVFIVSDGTGITAETFSHSILAQFEMRFRKVRMPFVDTPEKAHIAVGKINEAFHTEGVPPIVFTTLVNQEANKALRRAKAMILDMFQTFIEPLEKELGLKSTHAIGRFHQNADTEAYKNRIEAINFSLAHDDGQSHKNLQEADVILVGVSRSGKTPTSLYLAMQYGLKAANYPLIPDDFERGKLPKALYDYKPKIFGLSIDPQRLTEIRNERRPGSKYAAIENCRYEVNEAEAMMRREGIKWLSSTHKSIEEIATTILQEIKVDRDNY</sequence>
<comment type="function">
    <text evidence="1">Bifunctional serine/threonine kinase and phosphorylase involved in the regulation of the phosphoenolpyruvate synthase (PEPS) by catalyzing its phosphorylation/dephosphorylation.</text>
</comment>
<comment type="catalytic activity">
    <reaction evidence="1">
        <text>[pyruvate, water dikinase] + ADP = [pyruvate, water dikinase]-phosphate + AMP + H(+)</text>
        <dbReference type="Rhea" id="RHEA:46020"/>
        <dbReference type="Rhea" id="RHEA-COMP:11425"/>
        <dbReference type="Rhea" id="RHEA-COMP:11426"/>
        <dbReference type="ChEBI" id="CHEBI:15378"/>
        <dbReference type="ChEBI" id="CHEBI:43176"/>
        <dbReference type="ChEBI" id="CHEBI:68546"/>
        <dbReference type="ChEBI" id="CHEBI:456215"/>
        <dbReference type="ChEBI" id="CHEBI:456216"/>
        <dbReference type="EC" id="2.7.11.33"/>
    </reaction>
</comment>
<comment type="catalytic activity">
    <reaction evidence="1">
        <text>[pyruvate, water dikinase]-phosphate + phosphate + H(+) = [pyruvate, water dikinase] + diphosphate</text>
        <dbReference type="Rhea" id="RHEA:48580"/>
        <dbReference type="Rhea" id="RHEA-COMP:11425"/>
        <dbReference type="Rhea" id="RHEA-COMP:11426"/>
        <dbReference type="ChEBI" id="CHEBI:15378"/>
        <dbReference type="ChEBI" id="CHEBI:33019"/>
        <dbReference type="ChEBI" id="CHEBI:43176"/>
        <dbReference type="ChEBI" id="CHEBI:43474"/>
        <dbReference type="ChEBI" id="CHEBI:68546"/>
        <dbReference type="EC" id="2.7.4.28"/>
    </reaction>
</comment>
<comment type="similarity">
    <text evidence="1">Belongs to the pyruvate, phosphate/water dikinase regulatory protein family. PSRP subfamily.</text>
</comment>
<keyword id="KW-0418">Kinase</keyword>
<keyword id="KW-0547">Nucleotide-binding</keyword>
<keyword id="KW-0723">Serine/threonine-protein kinase</keyword>
<keyword id="KW-0808">Transferase</keyword>
<accession>Q470F3</accession>
<gene>
    <name type="ordered locus">Reut_A1865</name>
</gene>
<proteinExistence type="inferred from homology"/>
<dbReference type="EC" id="2.7.11.33" evidence="1"/>
<dbReference type="EC" id="2.7.4.28" evidence="1"/>
<dbReference type="EMBL" id="CP000090">
    <property type="protein sequence ID" value="AAZ61230.1"/>
    <property type="molecule type" value="Genomic_DNA"/>
</dbReference>
<dbReference type="SMR" id="Q470F3"/>
<dbReference type="STRING" id="264198.Reut_A1865"/>
<dbReference type="KEGG" id="reu:Reut_A1865"/>
<dbReference type="eggNOG" id="COG1806">
    <property type="taxonomic scope" value="Bacteria"/>
</dbReference>
<dbReference type="HOGENOM" id="CLU_046206_1_0_4"/>
<dbReference type="OrthoDB" id="9782201at2"/>
<dbReference type="GO" id="GO:0043531">
    <property type="term" value="F:ADP binding"/>
    <property type="evidence" value="ECO:0007669"/>
    <property type="project" value="UniProtKB-UniRule"/>
</dbReference>
<dbReference type="GO" id="GO:0005524">
    <property type="term" value="F:ATP binding"/>
    <property type="evidence" value="ECO:0007669"/>
    <property type="project" value="InterPro"/>
</dbReference>
<dbReference type="GO" id="GO:0016776">
    <property type="term" value="F:phosphotransferase activity, phosphate group as acceptor"/>
    <property type="evidence" value="ECO:0007669"/>
    <property type="project" value="UniProtKB-UniRule"/>
</dbReference>
<dbReference type="GO" id="GO:0004674">
    <property type="term" value="F:protein serine/threonine kinase activity"/>
    <property type="evidence" value="ECO:0007669"/>
    <property type="project" value="UniProtKB-UniRule"/>
</dbReference>
<dbReference type="HAMAP" id="MF_01062">
    <property type="entry name" value="PSRP"/>
    <property type="match status" value="1"/>
</dbReference>
<dbReference type="InterPro" id="IPR005177">
    <property type="entry name" value="Kinase-pyrophosphorylase"/>
</dbReference>
<dbReference type="InterPro" id="IPR026530">
    <property type="entry name" value="PSRP"/>
</dbReference>
<dbReference type="NCBIfam" id="NF003742">
    <property type="entry name" value="PRK05339.1"/>
    <property type="match status" value="1"/>
</dbReference>
<dbReference type="PANTHER" id="PTHR31756">
    <property type="entry name" value="PYRUVATE, PHOSPHATE DIKINASE REGULATORY PROTEIN 1, CHLOROPLASTIC"/>
    <property type="match status" value="1"/>
</dbReference>
<dbReference type="PANTHER" id="PTHR31756:SF3">
    <property type="entry name" value="PYRUVATE, PHOSPHATE DIKINASE REGULATORY PROTEIN 1, CHLOROPLASTIC"/>
    <property type="match status" value="1"/>
</dbReference>
<dbReference type="Pfam" id="PF03618">
    <property type="entry name" value="Kinase-PPPase"/>
    <property type="match status" value="1"/>
</dbReference>
<feature type="chain" id="PRO_0000196696" description="Putative phosphoenolpyruvate synthase regulatory protein">
    <location>
        <begin position="1"/>
        <end position="301"/>
    </location>
</feature>
<feature type="region of interest" description="Disordered" evidence="2">
    <location>
        <begin position="1"/>
        <end position="27"/>
    </location>
</feature>
<feature type="compositionally biased region" description="Low complexity" evidence="2">
    <location>
        <begin position="1"/>
        <end position="24"/>
    </location>
</feature>
<feature type="binding site" evidence="1">
    <location>
        <begin position="181"/>
        <end position="188"/>
    </location>
    <ligand>
        <name>ADP</name>
        <dbReference type="ChEBI" id="CHEBI:456216"/>
    </ligand>
</feature>
<protein>
    <recommendedName>
        <fullName evidence="1">Putative phosphoenolpyruvate synthase regulatory protein</fullName>
        <shortName evidence="1">PEP synthase regulatory protein</shortName>
        <shortName evidence="1">PSRP</shortName>
        <ecNumber evidence="1">2.7.11.33</ecNumber>
        <ecNumber evidence="1">2.7.4.28</ecNumber>
    </recommendedName>
    <alternativeName>
        <fullName evidence="1">Pyruvate, water dikinase regulatory protein</fullName>
    </alternativeName>
</protein>
<organism>
    <name type="scientific">Cupriavidus pinatubonensis (strain JMP 134 / LMG 1197)</name>
    <name type="common">Cupriavidus necator (strain JMP 134)</name>
    <dbReference type="NCBI Taxonomy" id="264198"/>
    <lineage>
        <taxon>Bacteria</taxon>
        <taxon>Pseudomonadati</taxon>
        <taxon>Pseudomonadota</taxon>
        <taxon>Betaproteobacteria</taxon>
        <taxon>Burkholderiales</taxon>
        <taxon>Burkholderiaceae</taxon>
        <taxon>Cupriavidus</taxon>
    </lineage>
</organism>
<evidence type="ECO:0000255" key="1">
    <source>
        <dbReference type="HAMAP-Rule" id="MF_01062"/>
    </source>
</evidence>
<evidence type="ECO:0000256" key="2">
    <source>
        <dbReference type="SAM" id="MobiDB-lite"/>
    </source>
</evidence>